<reference key="1">
    <citation type="submission" date="2006-07" db="EMBL/GenBank/DDBJ databases">
        <title>NISC comparative sequencing initiative.</title>
        <authorList>
            <person name="Antonellis A."/>
            <person name="Ayele K."/>
            <person name="Benjamin B."/>
            <person name="Blakesley R.W."/>
            <person name="Boakye A."/>
            <person name="Bouffard G.G."/>
            <person name="Brinkley C."/>
            <person name="Brooks S."/>
            <person name="Chu G."/>
            <person name="Coleman H."/>
            <person name="Engle J."/>
            <person name="Gestole M."/>
            <person name="Greene A."/>
            <person name="Guan X."/>
            <person name="Gupta J."/>
            <person name="Haghighi P."/>
            <person name="Han J."/>
            <person name="Hansen N."/>
            <person name="Ho S.-L."/>
            <person name="Hu P."/>
            <person name="Hunter G."/>
            <person name="Hurle B."/>
            <person name="Idol J.R."/>
            <person name="Kwong P."/>
            <person name="Laric P."/>
            <person name="Larson S."/>
            <person name="Lee-Lin S.-Q."/>
            <person name="Legaspi R."/>
            <person name="Madden M."/>
            <person name="Maduro Q.L."/>
            <person name="Maduro V.B."/>
            <person name="Margulies E.H."/>
            <person name="Masiello C."/>
            <person name="Maskeri B."/>
            <person name="McDowell J."/>
            <person name="Mojidi H.A."/>
            <person name="Mullikin J.C."/>
            <person name="Oestreicher J.S."/>
            <person name="Park M."/>
            <person name="Portnoy M.E."/>
            <person name="Prasad A."/>
            <person name="Puri O."/>
            <person name="Reddix-Dugue N."/>
            <person name="Schandler K."/>
            <person name="Schueler M.G."/>
            <person name="Sison C."/>
            <person name="Stantripop S."/>
            <person name="Stephen E."/>
            <person name="Taye A."/>
            <person name="Thomas J.W."/>
            <person name="Thomas P.J."/>
            <person name="Tsipouri V."/>
            <person name="Ung L."/>
            <person name="Vogt J.L."/>
            <person name="Wetherby K.D."/>
            <person name="Young A."/>
            <person name="Green E.D."/>
        </authorList>
    </citation>
    <scope>NUCLEOTIDE SEQUENCE [LARGE SCALE GENOMIC DNA]</scope>
</reference>
<dbReference type="EC" id="5.6.1.6" evidence="1"/>
<dbReference type="EMBL" id="DP000087">
    <property type="protein sequence ID" value="ABG66652.1"/>
    <property type="molecule type" value="Genomic_DNA"/>
</dbReference>
<dbReference type="SMR" id="Q108U0"/>
<dbReference type="FunCoup" id="Q108U0">
    <property type="interactions" value="13"/>
</dbReference>
<dbReference type="STRING" id="9785.ENSLAFP00000004825"/>
<dbReference type="GlyCosmos" id="Q108U0">
    <property type="glycosylation" value="4 sites, No reported glycans"/>
</dbReference>
<dbReference type="eggNOG" id="KOG0054">
    <property type="taxonomic scope" value="Eukaryota"/>
</dbReference>
<dbReference type="InParanoid" id="Q108U0"/>
<dbReference type="Proteomes" id="UP000007646">
    <property type="component" value="Unassembled WGS sequence"/>
</dbReference>
<dbReference type="GO" id="GO:0016324">
    <property type="term" value="C:apical plasma membrane"/>
    <property type="evidence" value="ECO:0000250"/>
    <property type="project" value="UniProtKB"/>
</dbReference>
<dbReference type="GO" id="GO:0034707">
    <property type="term" value="C:chloride channel complex"/>
    <property type="evidence" value="ECO:0007669"/>
    <property type="project" value="UniProtKB-KW"/>
</dbReference>
<dbReference type="GO" id="GO:0005829">
    <property type="term" value="C:cytosol"/>
    <property type="evidence" value="ECO:0007669"/>
    <property type="project" value="TreeGrafter"/>
</dbReference>
<dbReference type="GO" id="GO:0005769">
    <property type="term" value="C:early endosome"/>
    <property type="evidence" value="ECO:0000250"/>
    <property type="project" value="UniProtKB"/>
</dbReference>
<dbReference type="GO" id="GO:0031901">
    <property type="term" value="C:early endosome membrane"/>
    <property type="evidence" value="ECO:0007669"/>
    <property type="project" value="UniProtKB-SubCell"/>
</dbReference>
<dbReference type="GO" id="GO:0005789">
    <property type="term" value="C:endoplasmic reticulum membrane"/>
    <property type="evidence" value="ECO:0000250"/>
    <property type="project" value="UniProtKB"/>
</dbReference>
<dbReference type="GO" id="GO:0016020">
    <property type="term" value="C:membrane"/>
    <property type="evidence" value="ECO:0000250"/>
    <property type="project" value="UniProtKB"/>
</dbReference>
<dbReference type="GO" id="GO:0005634">
    <property type="term" value="C:nucleus"/>
    <property type="evidence" value="ECO:0000250"/>
    <property type="project" value="UniProtKB"/>
</dbReference>
<dbReference type="GO" id="GO:0005886">
    <property type="term" value="C:plasma membrane"/>
    <property type="evidence" value="ECO:0000250"/>
    <property type="project" value="UniProtKB"/>
</dbReference>
<dbReference type="GO" id="GO:0055038">
    <property type="term" value="C:recycling endosome membrane"/>
    <property type="evidence" value="ECO:0007669"/>
    <property type="project" value="UniProtKB-SubCell"/>
</dbReference>
<dbReference type="GO" id="GO:0140359">
    <property type="term" value="F:ABC-type transporter activity"/>
    <property type="evidence" value="ECO:0007669"/>
    <property type="project" value="InterPro"/>
</dbReference>
<dbReference type="GO" id="GO:0005524">
    <property type="term" value="F:ATP binding"/>
    <property type="evidence" value="ECO:0007669"/>
    <property type="project" value="UniProtKB-KW"/>
</dbReference>
<dbReference type="GO" id="GO:0016887">
    <property type="term" value="F:ATP hydrolysis activity"/>
    <property type="evidence" value="ECO:0000250"/>
    <property type="project" value="UniProtKB"/>
</dbReference>
<dbReference type="GO" id="GO:0015106">
    <property type="term" value="F:bicarbonate transmembrane transporter activity"/>
    <property type="evidence" value="ECO:0000250"/>
    <property type="project" value="UniProtKB"/>
</dbReference>
<dbReference type="GO" id="GO:0005254">
    <property type="term" value="F:chloride channel activity"/>
    <property type="evidence" value="ECO:0000250"/>
    <property type="project" value="UniProtKB"/>
</dbReference>
<dbReference type="GO" id="GO:0019869">
    <property type="term" value="F:chloride channel inhibitor activity"/>
    <property type="evidence" value="ECO:0000250"/>
    <property type="project" value="UniProtKB"/>
</dbReference>
<dbReference type="GO" id="GO:0015108">
    <property type="term" value="F:chloride transmembrane transporter activity"/>
    <property type="evidence" value="ECO:0000250"/>
    <property type="project" value="UniProtKB"/>
</dbReference>
<dbReference type="GO" id="GO:0005260">
    <property type="term" value="F:intracellularly ATP-gated chloride channel activity"/>
    <property type="evidence" value="ECO:0000250"/>
    <property type="project" value="UniProtKB"/>
</dbReference>
<dbReference type="GO" id="GO:0015701">
    <property type="term" value="P:bicarbonate transport"/>
    <property type="evidence" value="ECO:0000250"/>
    <property type="project" value="UniProtKB"/>
</dbReference>
<dbReference type="GO" id="GO:0071320">
    <property type="term" value="P:cellular response to cAMP"/>
    <property type="evidence" value="ECO:0000250"/>
    <property type="project" value="UniProtKB"/>
</dbReference>
<dbReference type="GO" id="GO:1904322">
    <property type="term" value="P:cellular response to forskolin"/>
    <property type="evidence" value="ECO:0000250"/>
    <property type="project" value="UniProtKB"/>
</dbReference>
<dbReference type="GO" id="GO:1902476">
    <property type="term" value="P:chloride transmembrane transport"/>
    <property type="evidence" value="ECO:0000250"/>
    <property type="project" value="UniProtKB"/>
</dbReference>
<dbReference type="GO" id="GO:0051454">
    <property type="term" value="P:intracellular pH elevation"/>
    <property type="evidence" value="ECO:0000250"/>
    <property type="project" value="UniProtKB"/>
</dbReference>
<dbReference type="GO" id="GO:0060081">
    <property type="term" value="P:membrane hyperpolarization"/>
    <property type="evidence" value="ECO:0000250"/>
    <property type="project" value="UniProtKB"/>
</dbReference>
<dbReference type="GO" id="GO:0050891">
    <property type="term" value="P:multicellular organismal-level water homeostasis"/>
    <property type="evidence" value="ECO:0000250"/>
    <property type="project" value="UniProtKB"/>
</dbReference>
<dbReference type="GO" id="GO:0034976">
    <property type="term" value="P:response to endoplasmic reticulum stress"/>
    <property type="evidence" value="ECO:0000250"/>
    <property type="project" value="UniProtKB"/>
</dbReference>
<dbReference type="GO" id="GO:0048240">
    <property type="term" value="P:sperm capacitation"/>
    <property type="evidence" value="ECO:0000250"/>
    <property type="project" value="UniProtKB"/>
</dbReference>
<dbReference type="GO" id="GO:0035377">
    <property type="term" value="P:transepithelial water transport"/>
    <property type="evidence" value="ECO:0000250"/>
    <property type="project" value="UniProtKB"/>
</dbReference>
<dbReference type="CDD" id="cd18594">
    <property type="entry name" value="ABC_6TM_CFTR_D1"/>
    <property type="match status" value="1"/>
</dbReference>
<dbReference type="CDD" id="cd03291">
    <property type="entry name" value="ABCC_CFTR1"/>
    <property type="match status" value="1"/>
</dbReference>
<dbReference type="FunFam" id="1.20.1560.10:FF:000017">
    <property type="entry name" value="Cystic fibrosis transmembrane conductance regulator"/>
    <property type="match status" value="1"/>
</dbReference>
<dbReference type="FunFam" id="1.20.1560.10:FF:000019">
    <property type="entry name" value="Cystic fibrosis transmembrane conductance regulator"/>
    <property type="match status" value="1"/>
</dbReference>
<dbReference type="FunFam" id="3.40.50.300:FF:000581">
    <property type="entry name" value="Cystic fibrosis transmembrane conductance regulator"/>
    <property type="match status" value="1"/>
</dbReference>
<dbReference type="FunFam" id="3.40.50.300:FF:000591">
    <property type="entry name" value="Cystic fibrosis transmembrane conductance regulator"/>
    <property type="match status" value="1"/>
</dbReference>
<dbReference type="Gene3D" id="1.20.1560.10">
    <property type="entry name" value="ABC transporter type 1, transmembrane domain"/>
    <property type="match status" value="2"/>
</dbReference>
<dbReference type="Gene3D" id="3.40.50.300">
    <property type="entry name" value="P-loop containing nucleotide triphosphate hydrolases"/>
    <property type="match status" value="2"/>
</dbReference>
<dbReference type="InterPro" id="IPR003593">
    <property type="entry name" value="AAA+_ATPase"/>
</dbReference>
<dbReference type="InterPro" id="IPR011527">
    <property type="entry name" value="ABC1_TM_dom"/>
</dbReference>
<dbReference type="InterPro" id="IPR036640">
    <property type="entry name" value="ABC1_TM_sf"/>
</dbReference>
<dbReference type="InterPro" id="IPR003439">
    <property type="entry name" value="ABC_transporter-like_ATP-bd"/>
</dbReference>
<dbReference type="InterPro" id="IPR017871">
    <property type="entry name" value="ABC_transporter-like_CS"/>
</dbReference>
<dbReference type="InterPro" id="IPR050173">
    <property type="entry name" value="ABC_transporter_C-like"/>
</dbReference>
<dbReference type="InterPro" id="IPR009147">
    <property type="entry name" value="CFTR/ABCC7"/>
</dbReference>
<dbReference type="InterPro" id="IPR047082">
    <property type="entry name" value="CFTR1_ATP-bd_dom1"/>
</dbReference>
<dbReference type="InterPro" id="IPR025837">
    <property type="entry name" value="CFTR_reg_dom"/>
</dbReference>
<dbReference type="InterPro" id="IPR027417">
    <property type="entry name" value="P-loop_NTPase"/>
</dbReference>
<dbReference type="NCBIfam" id="TIGR01271">
    <property type="entry name" value="CFTR_protein"/>
    <property type="match status" value="1"/>
</dbReference>
<dbReference type="PANTHER" id="PTHR24223">
    <property type="entry name" value="ATP-BINDING CASSETTE SUB-FAMILY C"/>
    <property type="match status" value="1"/>
</dbReference>
<dbReference type="PANTHER" id="PTHR24223:SF19">
    <property type="entry name" value="CYSTIC FIBROSIS TRANSMEMBRANE CONDUCTANCE REGULATOR"/>
    <property type="match status" value="1"/>
</dbReference>
<dbReference type="Pfam" id="PF00664">
    <property type="entry name" value="ABC_membrane"/>
    <property type="match status" value="2"/>
</dbReference>
<dbReference type="Pfam" id="PF00005">
    <property type="entry name" value="ABC_tran"/>
    <property type="match status" value="2"/>
</dbReference>
<dbReference type="Pfam" id="PF14396">
    <property type="entry name" value="CFTR_R"/>
    <property type="match status" value="1"/>
</dbReference>
<dbReference type="PRINTS" id="PR01851">
    <property type="entry name" value="CYSFIBREGLTR"/>
</dbReference>
<dbReference type="SMART" id="SM00382">
    <property type="entry name" value="AAA"/>
    <property type="match status" value="2"/>
</dbReference>
<dbReference type="SUPFAM" id="SSF90123">
    <property type="entry name" value="ABC transporter transmembrane region"/>
    <property type="match status" value="2"/>
</dbReference>
<dbReference type="SUPFAM" id="SSF52540">
    <property type="entry name" value="P-loop containing nucleoside triphosphate hydrolases"/>
    <property type="match status" value="2"/>
</dbReference>
<dbReference type="PROSITE" id="PS50929">
    <property type="entry name" value="ABC_TM1F"/>
    <property type="match status" value="2"/>
</dbReference>
<dbReference type="PROSITE" id="PS00211">
    <property type="entry name" value="ABC_TRANSPORTER_1"/>
    <property type="match status" value="1"/>
</dbReference>
<dbReference type="PROSITE" id="PS50893">
    <property type="entry name" value="ABC_TRANSPORTER_2"/>
    <property type="match status" value="2"/>
</dbReference>
<proteinExistence type="inferred from homology"/>
<protein>
    <recommendedName>
        <fullName evidence="1">Cystic fibrosis transmembrane conductance regulator</fullName>
        <shortName>CFTR</shortName>
    </recommendedName>
    <alternativeName>
        <fullName>ATP-binding cassette sub-family C member 7</fullName>
    </alternativeName>
    <alternativeName>
        <fullName>Channel conductance-controlling ATPase</fullName>
        <ecNumber evidence="1">5.6.1.6</ecNumber>
    </alternativeName>
    <alternativeName>
        <fullName>cAMP-dependent chloride channel</fullName>
    </alternativeName>
</protein>
<gene>
    <name evidence="1" type="primary">CFTR</name>
    <name type="synonym">ABCC7</name>
</gene>
<name>CFTR_LOXAF</name>
<feature type="chain" id="PRO_0000250466" description="Cystic fibrosis transmembrane conductance regulator">
    <location>
        <begin position="1"/>
        <end position="1482"/>
    </location>
</feature>
<feature type="topological domain" description="Cytoplasmic" evidence="1">
    <location>
        <begin position="1"/>
        <end position="77"/>
    </location>
</feature>
<feature type="transmembrane region" description="Helical; Name=1" evidence="1">
    <location>
        <begin position="78"/>
        <end position="98"/>
    </location>
</feature>
<feature type="topological domain" description="Extracellular" evidence="1">
    <location>
        <begin position="99"/>
        <end position="122"/>
    </location>
</feature>
<feature type="transmembrane region" description="Helical; Name=2" evidence="1">
    <location>
        <begin position="123"/>
        <end position="146"/>
    </location>
</feature>
<feature type="topological domain" description="Cytoplasmic" evidence="1">
    <location>
        <begin position="147"/>
        <end position="195"/>
    </location>
</feature>
<feature type="transmembrane region" description="Helical; Name=3" evidence="1">
    <location>
        <begin position="196"/>
        <end position="216"/>
    </location>
</feature>
<feature type="topological domain" description="Extracellular" evidence="1">
    <location>
        <begin position="217"/>
        <end position="222"/>
    </location>
</feature>
<feature type="transmembrane region" description="Helical; Name=4" evidence="1">
    <location>
        <begin position="223"/>
        <end position="243"/>
    </location>
</feature>
<feature type="topological domain" description="Cytoplasmic" evidence="1">
    <location>
        <begin position="244"/>
        <end position="298"/>
    </location>
</feature>
<feature type="transmembrane region" description="Helical; Name=5" evidence="1">
    <location>
        <begin position="299"/>
        <end position="319"/>
    </location>
</feature>
<feature type="topological domain" description="Extracellular" evidence="1">
    <location>
        <begin position="320"/>
        <end position="339"/>
    </location>
</feature>
<feature type="transmembrane region" description="Helical; Name=6" evidence="1">
    <location>
        <begin position="340"/>
        <end position="358"/>
    </location>
</feature>
<feature type="topological domain" description="Cytoplasmic" evidence="1">
    <location>
        <begin position="359"/>
        <end position="858"/>
    </location>
</feature>
<feature type="transmembrane region" description="Helical; Name=7" evidence="1">
    <location>
        <begin position="859"/>
        <end position="879"/>
    </location>
</feature>
<feature type="topological domain" description="Extracellular" evidence="1">
    <location>
        <begin position="880"/>
        <end position="919"/>
    </location>
</feature>
<feature type="transmembrane region" description="Discontinuously helical; Name=8" evidence="1">
    <location>
        <begin position="920"/>
        <end position="940"/>
    </location>
</feature>
<feature type="topological domain" description="Cytoplasmic" evidence="1">
    <location>
        <begin position="941"/>
        <end position="991"/>
    </location>
</feature>
<feature type="transmembrane region" description="Helical; Name=9" evidence="1">
    <location>
        <begin position="992"/>
        <end position="1012"/>
    </location>
</feature>
<feature type="topological domain" description="Extracellular" evidence="1">
    <location>
        <begin position="1013"/>
        <end position="1014"/>
    </location>
</feature>
<feature type="transmembrane region" description="Helical; Name=10" evidence="1">
    <location>
        <begin position="1015"/>
        <end position="1035"/>
    </location>
</feature>
<feature type="topological domain" description="Cytoplasmic" evidence="1">
    <location>
        <begin position="1036"/>
        <end position="1096"/>
    </location>
</feature>
<feature type="transmembrane region" description="Helical; Name=11" evidence="1">
    <location>
        <begin position="1097"/>
        <end position="1117"/>
    </location>
</feature>
<feature type="topological domain" description="Extracellular" evidence="1">
    <location>
        <begin position="1118"/>
        <end position="1131"/>
    </location>
</feature>
<feature type="transmembrane region" description="Helical; Name=12" evidence="1">
    <location>
        <begin position="1132"/>
        <end position="1152"/>
    </location>
</feature>
<feature type="topological domain" description="Cytoplasmic" evidence="1">
    <location>
        <begin position="1153"/>
        <end position="1482"/>
    </location>
</feature>
<feature type="domain" description="ABC transmembrane type-1 1" evidence="6">
    <location>
        <begin position="81"/>
        <end position="365"/>
    </location>
</feature>
<feature type="domain" description="ABC transporter 1" evidence="5">
    <location>
        <begin position="423"/>
        <end position="646"/>
    </location>
</feature>
<feature type="domain" description="ABC transmembrane type-1 2" evidence="6">
    <location>
        <begin position="859"/>
        <end position="1156"/>
    </location>
</feature>
<feature type="domain" description="ABC transporter 2" evidence="5">
    <location>
        <begin position="1212"/>
        <end position="1445"/>
    </location>
</feature>
<feature type="region of interest" description="Disordered R region" evidence="1">
    <location>
        <begin position="654"/>
        <end position="831"/>
    </location>
</feature>
<feature type="region of interest" description="Interaction with GORASP2" evidence="1">
    <location>
        <begin position="1388"/>
        <end position="1482"/>
    </location>
</feature>
<feature type="region of interest" description="Disordered" evidence="7">
    <location>
        <begin position="1454"/>
        <end position="1482"/>
    </location>
</feature>
<feature type="short sequence motif" description="PDZ-binding" evidence="1">
    <location>
        <begin position="1480"/>
        <end position="1482"/>
    </location>
</feature>
<feature type="compositionally biased region" description="Basic residues" evidence="7">
    <location>
        <begin position="1454"/>
        <end position="1463"/>
    </location>
</feature>
<feature type="compositionally biased region" description="Acidic residues" evidence="7">
    <location>
        <begin position="1472"/>
        <end position="1482"/>
    </location>
</feature>
<feature type="binding site" evidence="1">
    <location>
        <position position="401"/>
    </location>
    <ligand>
        <name>ATP</name>
        <dbReference type="ChEBI" id="CHEBI:30616"/>
        <label>1</label>
    </ligand>
</feature>
<feature type="binding site" evidence="1">
    <location>
        <position position="434"/>
    </location>
    <ligand>
        <name>ATP</name>
        <dbReference type="ChEBI" id="CHEBI:30616"/>
        <label>1</label>
    </ligand>
</feature>
<feature type="binding site" evidence="2 5">
    <location>
        <begin position="458"/>
        <end position="465"/>
    </location>
    <ligand>
        <name>ATP</name>
        <dbReference type="ChEBI" id="CHEBI:30616"/>
        <label>1</label>
    </ligand>
</feature>
<feature type="binding site" evidence="5">
    <location>
        <begin position="458"/>
        <end position="465"/>
    </location>
    <ligand>
        <name>ATP</name>
        <dbReference type="ChEBI" id="CHEBI:30616"/>
    </ligand>
</feature>
<feature type="binding site" evidence="2">
    <location>
        <position position="493"/>
    </location>
    <ligand>
        <name>ATP</name>
        <dbReference type="ChEBI" id="CHEBI:30616"/>
        <label>1</label>
    </ligand>
</feature>
<feature type="binding site" evidence="1">
    <location>
        <position position="1221"/>
    </location>
    <ligand>
        <name>ATP</name>
        <dbReference type="ChEBI" id="CHEBI:30616"/>
        <label>2</label>
    </ligand>
</feature>
<feature type="binding site" evidence="5">
    <location>
        <begin position="1246"/>
        <end position="1253"/>
    </location>
    <ligand>
        <name>ATP</name>
        <dbReference type="ChEBI" id="CHEBI:30616"/>
        <label>2</label>
    </ligand>
</feature>
<feature type="binding site" evidence="5">
    <location>
        <begin position="1246"/>
        <end position="1253"/>
    </location>
    <ligand>
        <name>ATP</name>
        <dbReference type="ChEBI" id="CHEBI:30616"/>
    </ligand>
</feature>
<feature type="modified residue" description="Phosphoserine" evidence="1">
    <location>
        <position position="549"/>
    </location>
</feature>
<feature type="modified residue" description="Phosphoserine" evidence="1">
    <location>
        <position position="660"/>
    </location>
</feature>
<feature type="modified residue" description="Phosphoserine; by PKA" evidence="1">
    <location>
        <position position="670"/>
    </location>
</feature>
<feature type="modified residue" description="Phosphoserine" evidence="1">
    <location>
        <position position="685"/>
    </location>
</feature>
<feature type="modified residue" description="Phosphoserine" evidence="1">
    <location>
        <position position="699"/>
    </location>
</feature>
<feature type="modified residue" description="Phosphoserine" evidence="1">
    <location>
        <position position="711"/>
    </location>
</feature>
<feature type="modified residue" description="Phosphothreonine" evidence="1">
    <location>
        <position position="716"/>
    </location>
</feature>
<feature type="modified residue" description="Phosphoserine" evidence="1">
    <location>
        <position position="736"/>
    </location>
</feature>
<feature type="modified residue" description="Phosphoserine" evidence="1">
    <location>
        <position position="767"/>
    </location>
</feature>
<feature type="modified residue" description="Phosphoserine" evidence="1">
    <location>
        <position position="790"/>
    </location>
</feature>
<feature type="modified residue" description="Phosphoserine" evidence="1">
    <location>
        <position position="795"/>
    </location>
</feature>
<feature type="modified residue" description="Phosphoserine" evidence="1">
    <location>
        <position position="813"/>
    </location>
</feature>
<feature type="modified residue" description="Phosphoserine" evidence="1">
    <location>
        <position position="1458"/>
    </location>
</feature>
<feature type="lipid moiety-binding region" description="S-palmitoyl cysteine" evidence="1">
    <location>
        <position position="524"/>
    </location>
</feature>
<feature type="lipid moiety-binding region" description="S-palmitoyl cysteine" evidence="1">
    <location>
        <position position="1397"/>
    </location>
</feature>
<feature type="glycosylation site" description="N-linked (GlcNAc...) asparagine" evidence="4">
    <location>
        <position position="894"/>
    </location>
</feature>
<feature type="glycosylation site" description="N-linked (GlcNAc...) asparagine" evidence="4">
    <location>
        <position position="895"/>
    </location>
</feature>
<feature type="glycosylation site" description="N-linked (GlcNAc...) asparagine" evidence="4">
    <location>
        <position position="901"/>
    </location>
</feature>
<feature type="glycosylation site" description="N-linked (GlcNAc...) asparagine" evidence="4">
    <location>
        <position position="910"/>
    </location>
</feature>
<feature type="cross-link" description="Glycyl lysine isopeptide (Lys-Gly) (interchain with G-Cter in ubiquitin)" evidence="1">
    <location>
        <position position="687"/>
    </location>
</feature>
<sequence>MQKSPLERASVISKLFFSWPGPILRKGYRQHLKLSDIYQIPSVDSADNLSEKLEREWDRELASKKNPKLINALRRCFFWRFVFYGILLYLGEVTKAVQPLLLGRIIASYDPDNKVERSIAIYLAIGLCLLFIVRTLLLHPAIFGLHHMGMQMRIAMFSLIYKKTLKLSSRVLDKISIGQLVSLLSNNLNKFDEGLALAHFVWIAPLQVTLLMGLIWDLLQASAFCGLAFLIIVALGQAGLGRMMMKYRDKRAGKINERLVITSEMIENIQSVKAYCWEEAMEKMIENLRQIELRLTRKAAYVRYFNSAAFFFSGFFVVFLSVLPYAMLKGIILRKIFTTISFCIVLRMAVTRQFPWAVQTWYDSLGAINKIQDFLQKQEYKTLEYNLTTTDVVMENVTAFWEEGFGELFEKAKQNNNNREISNGDNSLFFSNFSLLGAPVLKDINFKIERGQLLAVAGSTGAGKTSLLMMIMGELEPSEGKIKHSGRISFCSQFSWIMPGTIKENIIFGVSYDEYRYRSVIKACQLEEDISKFAEKDNIVLGEGGITLSGGQRARISLARAVYKDADLYLLDSPFGYLDVLTEKEIFESCVCKLMANKTRILVTSKMEHLKKADKILILHEGSSYFYGTFSELQTLRPDFSSELMGYDSFDQFSAERRNSILTETLRRFSLEGDTVSWNETKKQSFKQAGEFGEKRKNSILNSINSIRKFSVVQKTPLQMNGIDEDSDEPLERRLSLVPDSEQGEAILPRSNVINTGPTFQRRRRQSVLNLMTRPSINQGQNIHRRTAASARKMSLAPQANLTEMDIYSRRLSQDSGLEISEEINEEDLKECFFDDVENMPPVTTWNTYLRYVTVHKSLIFVLIWCLVVFLAEVAVSLVVLYLLRTSSLQDKGNNTTVNANSSYGVIVTNTSSYYLLYIYVGIADSLFALAIFRGLPLVHTLIKVSKTLHHKMLRSILQAPMSTFNTLKAGRILNRFSKDIAILDDLLPLTMFDFIQLLLIVIGAVVVVSVLQPYIFLATVPVIAAFIILRAYFLHTSQQLKQLESEARSPIFTHLVTSVKGLWTLRAFGRQPYFETLFHKALNLHTANWFLYLSTLRWFQMRIEIIFVIFFIAVTFVSILTTGEGEGTIGIILTLAMNIMNTLQWAVNSSIDVDSLMRSVSRIFKFIDMPTEESKPAKSVKPPKDGQLSKVMIIENQHVKKDYNWPSGGHMTVKDLTAKYIDGGNAILENISFSISPGQRVGLLGRTGSGKSTLLSAFLRLLNTEGEIQIDGVSWDSITLQQWRKAFGVIPQKVFIFSGTFRKNLDPYEQCSDQEIWKVADEVGLRSVIEQFPGKLDFVLVDGGYVLSHGHKQLMCLARSVLSKAKILLLDEPSAHLDPITYQIIRRTLKQAFADCTVILCEHRVEAMLECQQFLVIEENTVRQYDSIQKLLNEKSLFRQAISPLDRMKLLPHRNSSRHRSRSQIAALKEETEEEVQETRL</sequence>
<organism>
    <name type="scientific">Loxodonta africana</name>
    <name type="common">African elephant</name>
    <dbReference type="NCBI Taxonomy" id="9785"/>
    <lineage>
        <taxon>Eukaryota</taxon>
        <taxon>Metazoa</taxon>
        <taxon>Chordata</taxon>
        <taxon>Craniata</taxon>
        <taxon>Vertebrata</taxon>
        <taxon>Euteleostomi</taxon>
        <taxon>Mammalia</taxon>
        <taxon>Eutheria</taxon>
        <taxon>Afrotheria</taxon>
        <taxon>Proboscidea</taxon>
        <taxon>Elephantidae</taxon>
        <taxon>Loxodonta</taxon>
    </lineage>
</organism>
<evidence type="ECO:0000250" key="1">
    <source>
        <dbReference type="UniProtKB" id="P13569"/>
    </source>
</evidence>
<evidence type="ECO:0000250" key="2">
    <source>
        <dbReference type="UniProtKB" id="P26361"/>
    </source>
</evidence>
<evidence type="ECO:0000250" key="3">
    <source>
        <dbReference type="UniProtKB" id="P34158"/>
    </source>
</evidence>
<evidence type="ECO:0000255" key="4"/>
<evidence type="ECO:0000255" key="5">
    <source>
        <dbReference type="PROSITE-ProRule" id="PRU00434"/>
    </source>
</evidence>
<evidence type="ECO:0000255" key="6">
    <source>
        <dbReference type="PROSITE-ProRule" id="PRU00441"/>
    </source>
</evidence>
<evidence type="ECO:0000256" key="7">
    <source>
        <dbReference type="SAM" id="MobiDB-lite"/>
    </source>
</evidence>
<evidence type="ECO:0000305" key="8"/>
<accession>Q108U0</accession>
<comment type="function">
    <text evidence="1 2">Epithelial ion channel that plays an important role in the regulation of epithelial ion and water transport and fluid homeostasis. Mediates the transport of chloride ions across the cell membrane (By similarity). Possesses an intrinsic ATPase activity and utilizes ATP to gate its channel; the passive flow of anions through the channel is gated by cycles of ATP binding and hydrolysis by the ATP-binding domains (By similarity). The ion channel is also permeable to HCO(3)(-); selectivity depends on the extracellular chloride concentration. Exerts its function also by modulating the activity of other ion channels and transporters. Contributes to the regulation of the pH and the ion content of the epithelial fluid layer. Modulates the activity of the epithelial sodium channel (ENaC) complex, in part by regulating the cell surface expression of the ENaC complex. May regulate bicarbonate secretion and salvage in epithelial cells by regulating the transporter SLC4A7. Can inhibit the chloride channel activity of ANO1 (By similarity). Plays a role in the chloride and bicarbonate homeostasis during sperm epididymal maturation and capacitation (By similarity).</text>
</comment>
<comment type="catalytic activity">
    <reaction evidence="1">
        <text>ATP + H2O + closed Cl(-) channel = ADP + phosphate + open Cl(-) channel.</text>
        <dbReference type="EC" id="5.6.1.6"/>
    </reaction>
</comment>
<comment type="catalytic activity">
    <reaction evidence="1">
        <text>chloride(in) = chloride(out)</text>
        <dbReference type="Rhea" id="RHEA:29823"/>
        <dbReference type="ChEBI" id="CHEBI:17996"/>
    </reaction>
</comment>
<comment type="catalytic activity">
    <reaction evidence="1">
        <text>hydrogencarbonate(in) = hydrogencarbonate(out)</text>
        <dbReference type="Rhea" id="RHEA:28695"/>
        <dbReference type="ChEBI" id="CHEBI:17544"/>
    </reaction>
</comment>
<comment type="catalytic activity">
    <reaction evidence="1">
        <text>ATP + H2O = ADP + phosphate + H(+)</text>
        <dbReference type="Rhea" id="RHEA:13065"/>
        <dbReference type="ChEBI" id="CHEBI:15377"/>
        <dbReference type="ChEBI" id="CHEBI:15378"/>
        <dbReference type="ChEBI" id="CHEBI:30616"/>
        <dbReference type="ChEBI" id="CHEBI:43474"/>
        <dbReference type="ChEBI" id="CHEBI:456216"/>
    </reaction>
    <physiologicalReaction direction="left-to-right" evidence="1">
        <dbReference type="Rhea" id="RHEA:13066"/>
    </physiologicalReaction>
</comment>
<comment type="subunit">
    <text evidence="1 2 3">Monomer; does not require oligomerization for channel activity. May form oligomers in the membrane (By similarity). Interacts with SLC26A3, SLC26A6 and NHERF1 (By similarity). Interacts with SHANK2 (By similarity). Interacts with MYO6 (By similarity). Interacts (via C-terminus) with GOPC (via PDZ domain); this promotes CFTR internalization and thereby decreases channel activity. Interacts with SLC4A7 through NHERF1. Found in a complex with MYO5B and RAB11A. Interacts with ANO1. Interacts with SLC26A8 (By similarity). Interacts with AHCYL1; the interaction increases CFTR activity (By similarity). Interacts with CSE1L (By similarity). The core-glycosylated form interacts with GORASP2 (via PDZ GRASP-type 1 domain) in respone to ER stress (By similarity). Interacts with MARCHF2; the interaction leads to CFTR ubiqtuitination and degradation (By similarity). Interacts with ADGRG2 (By similarity).</text>
</comment>
<comment type="subcellular location">
    <subcellularLocation>
        <location evidence="2">Apical cell membrane</location>
        <topology evidence="1">Multi-pass membrane protein</topology>
    </subcellularLocation>
    <subcellularLocation>
        <location evidence="1">Early endosome membrane</location>
        <topology evidence="1">Multi-pass membrane protein</topology>
    </subcellularLocation>
    <subcellularLocation>
        <location evidence="2">Cell membrane</location>
        <topology evidence="1">Multi-pass membrane protein</topology>
    </subcellularLocation>
    <subcellularLocation>
        <location evidence="1">Recycling endosome membrane</location>
        <topology evidence="1">Multi-pass membrane protein</topology>
    </subcellularLocation>
    <subcellularLocation>
        <location evidence="1">Endoplasmic reticulum membrane</location>
        <topology evidence="1">Multi-pass membrane protein</topology>
    </subcellularLocation>
    <subcellularLocation>
        <location evidence="3">Nucleus</location>
    </subcellularLocation>
    <text evidence="1 3">The channel is internalized from the cell surface into an endosomal recycling compartment, from where it is recycled to the cell membrane. In the oviduct and bronchus, detected on the apical side of epithelial cells, but not associated with cilia. In Sertoli cells, a processed product is detected in the nucleus. ER stress induces GORASP2-mediated unconventional (ER/Golgi-independent) trafficking of core-glycosylated CFTR to cell membrane.</text>
</comment>
<comment type="domain">
    <text evidence="1 2">Binds and hydrolyzes ATP via the two cytoplasmic ABC transporter nucleotide-binding domains. The two ATP-binding domains interact with each other, forming a head-to-tail dimer. Normal ATPase activity requires interaction between the two domains. The first ABC transporter nucleotide-binding domain has no ATPase activity by itself.</text>
</comment>
<comment type="domain">
    <text evidence="1">The PDZ-binding motif mediates interactions with GOPC and with the SLC4A7, NHERF1/EBP50 complex.</text>
</comment>
<comment type="domain">
    <text evidence="1">The disordered R region mediates channel activation when it is phosphorylated, but not in the absence of phosphorylation.</text>
</comment>
<comment type="PTM">
    <text evidence="1">N-glycosylated.</text>
</comment>
<comment type="PTM">
    <text evidence="1">Phosphorylated; cAMP treatment promotes phosphorylation and activates the channel. Dephosphorylation decreases the ATPase activity (in vitro). Phosphorylation at PKA sites activates the channel. Phosphorylation at PKC sites enhances the response to phosphorylation by PKA. Phosphorylated by AMPK; this inhibits channel activity.</text>
</comment>
<comment type="PTM">
    <text evidence="1">Ubiquitinated, leading to its degradation in the lysosome. Deubiquitination by USP10 in early endosomes enhances its endocytic recycling to the cell membrane. Ubiquitinated by RNF185 during ER stress. Ubiquitinated by MARCHF2 (By similarity).</text>
</comment>
<comment type="similarity">
    <text evidence="8">Belongs to the ABC transporter superfamily. ABCC family. CFTR transporter (TC 3.A.1.202) subfamily.</text>
</comment>
<keyword id="KW-0067">ATP-binding</keyword>
<keyword id="KW-1003">Cell membrane</keyword>
<keyword id="KW-0868">Chloride</keyword>
<keyword id="KW-0869">Chloride channel</keyword>
<keyword id="KW-0256">Endoplasmic reticulum</keyword>
<keyword id="KW-0967">Endosome</keyword>
<keyword id="KW-0325">Glycoprotein</keyword>
<keyword id="KW-0407">Ion channel</keyword>
<keyword id="KW-0406">Ion transport</keyword>
<keyword id="KW-0413">Isomerase</keyword>
<keyword id="KW-1017">Isopeptide bond</keyword>
<keyword id="KW-0449">Lipoprotein</keyword>
<keyword id="KW-0472">Membrane</keyword>
<keyword id="KW-0547">Nucleotide-binding</keyword>
<keyword id="KW-0539">Nucleus</keyword>
<keyword id="KW-0564">Palmitate</keyword>
<keyword id="KW-0597">Phosphoprotein</keyword>
<keyword id="KW-1185">Reference proteome</keyword>
<keyword id="KW-0677">Repeat</keyword>
<keyword id="KW-0812">Transmembrane</keyword>
<keyword id="KW-1133">Transmembrane helix</keyword>
<keyword id="KW-0813">Transport</keyword>
<keyword id="KW-0832">Ubl conjugation</keyword>